<feature type="chain" id="PRO_1000023199" description="Thymidylate kinase">
    <location>
        <begin position="1"/>
        <end position="210"/>
    </location>
</feature>
<feature type="binding site" evidence="1">
    <location>
        <begin position="11"/>
        <end position="18"/>
    </location>
    <ligand>
        <name>ATP</name>
        <dbReference type="ChEBI" id="CHEBI:30616"/>
    </ligand>
</feature>
<organism>
    <name type="scientific">Histophilus somni (strain 129Pt)</name>
    <name type="common">Haemophilus somnus</name>
    <dbReference type="NCBI Taxonomy" id="205914"/>
    <lineage>
        <taxon>Bacteria</taxon>
        <taxon>Pseudomonadati</taxon>
        <taxon>Pseudomonadota</taxon>
        <taxon>Gammaproteobacteria</taxon>
        <taxon>Pasteurellales</taxon>
        <taxon>Pasteurellaceae</taxon>
        <taxon>Histophilus</taxon>
    </lineage>
</organism>
<keyword id="KW-0067">ATP-binding</keyword>
<keyword id="KW-0418">Kinase</keyword>
<keyword id="KW-0545">Nucleotide biosynthesis</keyword>
<keyword id="KW-0547">Nucleotide-binding</keyword>
<keyword id="KW-0808">Transferase</keyword>
<comment type="function">
    <text evidence="1">Phosphorylation of dTMP to form dTDP in both de novo and salvage pathways of dTTP synthesis.</text>
</comment>
<comment type="catalytic activity">
    <reaction evidence="1">
        <text>dTMP + ATP = dTDP + ADP</text>
        <dbReference type="Rhea" id="RHEA:13517"/>
        <dbReference type="ChEBI" id="CHEBI:30616"/>
        <dbReference type="ChEBI" id="CHEBI:58369"/>
        <dbReference type="ChEBI" id="CHEBI:63528"/>
        <dbReference type="ChEBI" id="CHEBI:456216"/>
        <dbReference type="EC" id="2.7.4.9"/>
    </reaction>
</comment>
<comment type="similarity">
    <text evidence="1">Belongs to the thymidylate kinase family.</text>
</comment>
<evidence type="ECO:0000255" key="1">
    <source>
        <dbReference type="HAMAP-Rule" id="MF_00165"/>
    </source>
</evidence>
<gene>
    <name evidence="1" type="primary">tmk</name>
    <name type="ordered locus">HS_1487</name>
</gene>
<protein>
    <recommendedName>
        <fullName evidence="1">Thymidylate kinase</fullName>
        <ecNumber evidence="1">2.7.4.9</ecNumber>
    </recommendedName>
    <alternativeName>
        <fullName evidence="1">dTMP kinase</fullName>
    </alternativeName>
</protein>
<sequence>MKTGKFIVIEGLEGAGKSSTHQVVVNTLKEFGIHEVVFTREPGGTPLAEKLRYLIKHEVEELVTAKAELLMLYAARVQLVENVIKPALAQGKWVVGDRHDLSSQAYQGGGRGLDQHLMTTLKNAVLGDFKPDFTLYLDIEPEIGLARVRGRGELDRIEQQNLDFFHRTRARYLQLVQQDPNAVLINADQPIELVQQDIRKAVQKFIEENV</sequence>
<name>KTHY_HISS1</name>
<proteinExistence type="inferred from homology"/>
<dbReference type="EC" id="2.7.4.9" evidence="1"/>
<dbReference type="EMBL" id="CP000436">
    <property type="protein sequence ID" value="ABI25760.1"/>
    <property type="molecule type" value="Genomic_DNA"/>
</dbReference>
<dbReference type="SMR" id="Q0I5J0"/>
<dbReference type="KEGG" id="hso:HS_1487"/>
<dbReference type="eggNOG" id="COG0125">
    <property type="taxonomic scope" value="Bacteria"/>
</dbReference>
<dbReference type="HOGENOM" id="CLU_049131_0_1_6"/>
<dbReference type="GO" id="GO:0005829">
    <property type="term" value="C:cytosol"/>
    <property type="evidence" value="ECO:0007669"/>
    <property type="project" value="TreeGrafter"/>
</dbReference>
<dbReference type="GO" id="GO:0005524">
    <property type="term" value="F:ATP binding"/>
    <property type="evidence" value="ECO:0007669"/>
    <property type="project" value="UniProtKB-UniRule"/>
</dbReference>
<dbReference type="GO" id="GO:0004798">
    <property type="term" value="F:dTMP kinase activity"/>
    <property type="evidence" value="ECO:0007669"/>
    <property type="project" value="UniProtKB-UniRule"/>
</dbReference>
<dbReference type="GO" id="GO:0006233">
    <property type="term" value="P:dTDP biosynthetic process"/>
    <property type="evidence" value="ECO:0007669"/>
    <property type="project" value="InterPro"/>
</dbReference>
<dbReference type="GO" id="GO:0006235">
    <property type="term" value="P:dTTP biosynthetic process"/>
    <property type="evidence" value="ECO:0007669"/>
    <property type="project" value="UniProtKB-UniRule"/>
</dbReference>
<dbReference type="GO" id="GO:0006227">
    <property type="term" value="P:dUDP biosynthetic process"/>
    <property type="evidence" value="ECO:0007669"/>
    <property type="project" value="TreeGrafter"/>
</dbReference>
<dbReference type="CDD" id="cd01672">
    <property type="entry name" value="TMPK"/>
    <property type="match status" value="1"/>
</dbReference>
<dbReference type="FunFam" id="3.40.50.300:FF:000321">
    <property type="entry name" value="Thymidylate kinase"/>
    <property type="match status" value="1"/>
</dbReference>
<dbReference type="Gene3D" id="3.40.50.300">
    <property type="entry name" value="P-loop containing nucleotide triphosphate hydrolases"/>
    <property type="match status" value="1"/>
</dbReference>
<dbReference type="HAMAP" id="MF_00165">
    <property type="entry name" value="Thymidylate_kinase"/>
    <property type="match status" value="1"/>
</dbReference>
<dbReference type="InterPro" id="IPR027417">
    <property type="entry name" value="P-loop_NTPase"/>
</dbReference>
<dbReference type="InterPro" id="IPR039430">
    <property type="entry name" value="Thymidylate_kin-like_dom"/>
</dbReference>
<dbReference type="InterPro" id="IPR018095">
    <property type="entry name" value="Thymidylate_kin_CS"/>
</dbReference>
<dbReference type="InterPro" id="IPR018094">
    <property type="entry name" value="Thymidylate_kinase"/>
</dbReference>
<dbReference type="NCBIfam" id="TIGR00041">
    <property type="entry name" value="DTMP_kinase"/>
    <property type="match status" value="1"/>
</dbReference>
<dbReference type="PANTHER" id="PTHR10344">
    <property type="entry name" value="THYMIDYLATE KINASE"/>
    <property type="match status" value="1"/>
</dbReference>
<dbReference type="PANTHER" id="PTHR10344:SF4">
    <property type="entry name" value="UMP-CMP KINASE 2, MITOCHONDRIAL"/>
    <property type="match status" value="1"/>
</dbReference>
<dbReference type="Pfam" id="PF02223">
    <property type="entry name" value="Thymidylate_kin"/>
    <property type="match status" value="1"/>
</dbReference>
<dbReference type="SUPFAM" id="SSF52540">
    <property type="entry name" value="P-loop containing nucleoside triphosphate hydrolases"/>
    <property type="match status" value="1"/>
</dbReference>
<dbReference type="PROSITE" id="PS01331">
    <property type="entry name" value="THYMIDYLATE_KINASE"/>
    <property type="match status" value="1"/>
</dbReference>
<reference key="1">
    <citation type="journal article" date="2007" name="J. Bacteriol.">
        <title>Complete genome sequence of Haemophilus somnus (Histophilus somni) strain 129Pt and comparison to Haemophilus ducreyi 35000HP and Haemophilus influenzae Rd.</title>
        <authorList>
            <person name="Challacombe J.F."/>
            <person name="Duncan A.J."/>
            <person name="Brettin T.S."/>
            <person name="Bruce D."/>
            <person name="Chertkov O."/>
            <person name="Detter J.C."/>
            <person name="Han C.S."/>
            <person name="Misra M."/>
            <person name="Richardson P."/>
            <person name="Tapia R."/>
            <person name="Thayer N."/>
            <person name="Xie G."/>
            <person name="Inzana T.J."/>
        </authorList>
    </citation>
    <scope>NUCLEOTIDE SEQUENCE [LARGE SCALE GENOMIC DNA]</scope>
    <source>
        <strain>129Pt</strain>
    </source>
</reference>
<accession>Q0I5J0</accession>